<dbReference type="EC" id="3.1.26.4" evidence="1"/>
<dbReference type="EMBL" id="CP000681">
    <property type="protein sequence ID" value="ABP75504.1"/>
    <property type="molecule type" value="Genomic_DNA"/>
</dbReference>
<dbReference type="SMR" id="A4Y6C1"/>
<dbReference type="STRING" id="319224.Sputcn32_1779"/>
<dbReference type="KEGG" id="spc:Sputcn32_1779"/>
<dbReference type="eggNOG" id="COG0328">
    <property type="taxonomic scope" value="Bacteria"/>
</dbReference>
<dbReference type="HOGENOM" id="CLU_030894_6_0_6"/>
<dbReference type="GO" id="GO:0005737">
    <property type="term" value="C:cytoplasm"/>
    <property type="evidence" value="ECO:0007669"/>
    <property type="project" value="UniProtKB-SubCell"/>
</dbReference>
<dbReference type="GO" id="GO:0000287">
    <property type="term" value="F:magnesium ion binding"/>
    <property type="evidence" value="ECO:0007669"/>
    <property type="project" value="UniProtKB-UniRule"/>
</dbReference>
<dbReference type="GO" id="GO:0003676">
    <property type="term" value="F:nucleic acid binding"/>
    <property type="evidence" value="ECO:0007669"/>
    <property type="project" value="InterPro"/>
</dbReference>
<dbReference type="GO" id="GO:0004523">
    <property type="term" value="F:RNA-DNA hybrid ribonuclease activity"/>
    <property type="evidence" value="ECO:0007669"/>
    <property type="project" value="UniProtKB-UniRule"/>
</dbReference>
<dbReference type="GO" id="GO:0043137">
    <property type="term" value="P:DNA replication, removal of RNA primer"/>
    <property type="evidence" value="ECO:0007669"/>
    <property type="project" value="TreeGrafter"/>
</dbReference>
<dbReference type="CDD" id="cd09278">
    <property type="entry name" value="RNase_HI_prokaryote_like"/>
    <property type="match status" value="1"/>
</dbReference>
<dbReference type="FunFam" id="3.30.420.10:FF:000008">
    <property type="entry name" value="Ribonuclease H"/>
    <property type="match status" value="1"/>
</dbReference>
<dbReference type="Gene3D" id="3.30.420.10">
    <property type="entry name" value="Ribonuclease H-like superfamily/Ribonuclease H"/>
    <property type="match status" value="1"/>
</dbReference>
<dbReference type="HAMAP" id="MF_00042">
    <property type="entry name" value="RNase_H"/>
    <property type="match status" value="1"/>
</dbReference>
<dbReference type="InterPro" id="IPR050092">
    <property type="entry name" value="RNase_H"/>
</dbReference>
<dbReference type="InterPro" id="IPR012337">
    <property type="entry name" value="RNaseH-like_sf"/>
</dbReference>
<dbReference type="InterPro" id="IPR002156">
    <property type="entry name" value="RNaseH_domain"/>
</dbReference>
<dbReference type="InterPro" id="IPR036397">
    <property type="entry name" value="RNaseH_sf"/>
</dbReference>
<dbReference type="InterPro" id="IPR022892">
    <property type="entry name" value="RNaseHI"/>
</dbReference>
<dbReference type="NCBIfam" id="NF001236">
    <property type="entry name" value="PRK00203.1"/>
    <property type="match status" value="1"/>
</dbReference>
<dbReference type="PANTHER" id="PTHR10642">
    <property type="entry name" value="RIBONUCLEASE H1"/>
    <property type="match status" value="1"/>
</dbReference>
<dbReference type="PANTHER" id="PTHR10642:SF26">
    <property type="entry name" value="RIBONUCLEASE H1"/>
    <property type="match status" value="1"/>
</dbReference>
<dbReference type="Pfam" id="PF00075">
    <property type="entry name" value="RNase_H"/>
    <property type="match status" value="1"/>
</dbReference>
<dbReference type="SUPFAM" id="SSF53098">
    <property type="entry name" value="Ribonuclease H-like"/>
    <property type="match status" value="1"/>
</dbReference>
<dbReference type="PROSITE" id="PS50879">
    <property type="entry name" value="RNASE_H_1"/>
    <property type="match status" value="1"/>
</dbReference>
<comment type="function">
    <text evidence="1">Endonuclease that specifically degrades the RNA of RNA-DNA hybrids.</text>
</comment>
<comment type="catalytic activity">
    <reaction evidence="1">
        <text>Endonucleolytic cleavage to 5'-phosphomonoester.</text>
        <dbReference type="EC" id="3.1.26.4"/>
    </reaction>
</comment>
<comment type="cofactor">
    <cofactor evidence="1">
        <name>Mg(2+)</name>
        <dbReference type="ChEBI" id="CHEBI:18420"/>
    </cofactor>
    <text evidence="1">Binds 1 Mg(2+) ion per subunit. May bind a second metal ion at a regulatory site, or after substrate binding.</text>
</comment>
<comment type="subunit">
    <text evidence="1">Monomer.</text>
</comment>
<comment type="subcellular location">
    <subcellularLocation>
        <location evidence="1">Cytoplasm</location>
    </subcellularLocation>
</comment>
<comment type="similarity">
    <text evidence="1">Belongs to the RNase H family.</text>
</comment>
<protein>
    <recommendedName>
        <fullName evidence="1">Ribonuclease H</fullName>
        <shortName evidence="1">RNase H</shortName>
        <ecNumber evidence="1">3.1.26.4</ecNumber>
    </recommendedName>
</protein>
<proteinExistence type="inferred from homology"/>
<gene>
    <name evidence="1" type="primary">rnhA</name>
    <name type="ordered locus">Sputcn32_1779</name>
</gene>
<keyword id="KW-0963">Cytoplasm</keyword>
<keyword id="KW-0255">Endonuclease</keyword>
<keyword id="KW-0378">Hydrolase</keyword>
<keyword id="KW-0460">Magnesium</keyword>
<keyword id="KW-0479">Metal-binding</keyword>
<keyword id="KW-0540">Nuclease</keyword>
<name>RNH_SHEPC</name>
<feature type="chain" id="PRO_1000074671" description="Ribonuclease H">
    <location>
        <begin position="1"/>
        <end position="156"/>
    </location>
</feature>
<feature type="domain" description="RNase H type-1" evidence="2">
    <location>
        <begin position="3"/>
        <end position="144"/>
    </location>
</feature>
<feature type="binding site" evidence="1">
    <location>
        <position position="12"/>
    </location>
    <ligand>
        <name>Mg(2+)</name>
        <dbReference type="ChEBI" id="CHEBI:18420"/>
        <label>1</label>
    </ligand>
</feature>
<feature type="binding site" evidence="1">
    <location>
        <position position="12"/>
    </location>
    <ligand>
        <name>Mg(2+)</name>
        <dbReference type="ChEBI" id="CHEBI:18420"/>
        <label>2</label>
    </ligand>
</feature>
<feature type="binding site" evidence="1">
    <location>
        <position position="50"/>
    </location>
    <ligand>
        <name>Mg(2+)</name>
        <dbReference type="ChEBI" id="CHEBI:18420"/>
        <label>1</label>
    </ligand>
</feature>
<feature type="binding site" evidence="1">
    <location>
        <position position="72"/>
    </location>
    <ligand>
        <name>Mg(2+)</name>
        <dbReference type="ChEBI" id="CHEBI:18420"/>
        <label>1</label>
    </ligand>
</feature>
<feature type="binding site" evidence="1">
    <location>
        <position position="136"/>
    </location>
    <ligand>
        <name>Mg(2+)</name>
        <dbReference type="ChEBI" id="CHEBI:18420"/>
        <label>2</label>
    </ligand>
</feature>
<accession>A4Y6C1</accession>
<sequence length="156" mass="17685">MTERKLIHIFTDGSCLGNPGPGGYGIVMNYKGHTKEMSDGFALTTNNRMELLAPIIALESLKEPCRVVLTSDSQYMRQGIMTWIHGWKKKGWMTSNRTPVKNVDLWKRLDKVSQMHTIDWQWVKGHAGHAENERCDILARSAAEANPTQIDEGYQP</sequence>
<evidence type="ECO:0000255" key="1">
    <source>
        <dbReference type="HAMAP-Rule" id="MF_00042"/>
    </source>
</evidence>
<evidence type="ECO:0000255" key="2">
    <source>
        <dbReference type="PROSITE-ProRule" id="PRU00408"/>
    </source>
</evidence>
<organism>
    <name type="scientific">Shewanella putrefaciens (strain CN-32 / ATCC BAA-453)</name>
    <dbReference type="NCBI Taxonomy" id="319224"/>
    <lineage>
        <taxon>Bacteria</taxon>
        <taxon>Pseudomonadati</taxon>
        <taxon>Pseudomonadota</taxon>
        <taxon>Gammaproteobacteria</taxon>
        <taxon>Alteromonadales</taxon>
        <taxon>Shewanellaceae</taxon>
        <taxon>Shewanella</taxon>
    </lineage>
</organism>
<reference key="1">
    <citation type="submission" date="2007-04" db="EMBL/GenBank/DDBJ databases">
        <title>Complete sequence of Shewanella putrefaciens CN-32.</title>
        <authorList>
            <consortium name="US DOE Joint Genome Institute"/>
            <person name="Copeland A."/>
            <person name="Lucas S."/>
            <person name="Lapidus A."/>
            <person name="Barry K."/>
            <person name="Detter J.C."/>
            <person name="Glavina del Rio T."/>
            <person name="Hammon N."/>
            <person name="Israni S."/>
            <person name="Dalin E."/>
            <person name="Tice H."/>
            <person name="Pitluck S."/>
            <person name="Chain P."/>
            <person name="Malfatti S."/>
            <person name="Shin M."/>
            <person name="Vergez L."/>
            <person name="Schmutz J."/>
            <person name="Larimer F."/>
            <person name="Land M."/>
            <person name="Hauser L."/>
            <person name="Kyrpides N."/>
            <person name="Mikhailova N."/>
            <person name="Romine M.F."/>
            <person name="Fredrickson J."/>
            <person name="Tiedje J."/>
            <person name="Richardson P."/>
        </authorList>
    </citation>
    <scope>NUCLEOTIDE SEQUENCE [LARGE SCALE GENOMIC DNA]</scope>
    <source>
        <strain>CN-32 / ATCC BAA-453</strain>
    </source>
</reference>